<organism>
    <name type="scientific">Tetraodon nigroviridis</name>
    <name type="common">Spotted green pufferfish</name>
    <name type="synonym">Chelonodon nigroviridis</name>
    <dbReference type="NCBI Taxonomy" id="99883"/>
    <lineage>
        <taxon>Eukaryota</taxon>
        <taxon>Metazoa</taxon>
        <taxon>Chordata</taxon>
        <taxon>Craniata</taxon>
        <taxon>Vertebrata</taxon>
        <taxon>Euteleostomi</taxon>
        <taxon>Actinopterygii</taxon>
        <taxon>Neopterygii</taxon>
        <taxon>Teleostei</taxon>
        <taxon>Neoteleostei</taxon>
        <taxon>Acanthomorphata</taxon>
        <taxon>Eupercaria</taxon>
        <taxon>Tetraodontiformes</taxon>
        <taxon>Tetradontoidea</taxon>
        <taxon>Tetraodontidae</taxon>
        <taxon>Tetraodon</taxon>
    </lineage>
</organism>
<feature type="chain" id="PRO_0000397909" description="Probable E3 ubiquitin-protein ligase makorin-1">
    <location>
        <begin position="1"/>
        <end position="372"/>
    </location>
</feature>
<feature type="zinc finger region" description="C3H1-type 1" evidence="5">
    <location>
        <begin position="20"/>
        <end position="45"/>
    </location>
</feature>
<feature type="zinc finger region" description="C3H1-type 2" evidence="5">
    <location>
        <begin position="48"/>
        <end position="75"/>
    </location>
</feature>
<feature type="zinc finger region" description="C3H1-type 3" evidence="5">
    <location>
        <begin position="153"/>
        <end position="180"/>
    </location>
</feature>
<feature type="zinc finger region" description="RING-type" evidence="4">
    <location>
        <begin position="226"/>
        <end position="280"/>
    </location>
</feature>
<feature type="zinc finger region" description="C3H1-type 4" evidence="5">
    <location>
        <begin position="309"/>
        <end position="338"/>
    </location>
</feature>
<feature type="region of interest" description="Disordered" evidence="6">
    <location>
        <begin position="78"/>
        <end position="110"/>
    </location>
</feature>
<feature type="region of interest" description="Makorin-type Cys-His" evidence="3">
    <location>
        <begin position="181"/>
        <end position="208"/>
    </location>
</feature>
<feature type="compositionally biased region" description="Low complexity" evidence="6">
    <location>
        <begin position="93"/>
        <end position="103"/>
    </location>
</feature>
<gene>
    <name evidence="2" type="primary">mkrn1</name>
    <name type="ORF">GSTENG00013898001</name>
</gene>
<comment type="function">
    <text evidence="1">E3 ubiquitin ligase catalyzing the covalent attachment of ubiquitin moieties onto substrate proteins.</text>
</comment>
<comment type="catalytic activity">
    <reaction>
        <text>S-ubiquitinyl-[E2 ubiquitin-conjugating enzyme]-L-cysteine + [acceptor protein]-L-lysine = [E2 ubiquitin-conjugating enzyme]-L-cysteine + N(6)-ubiquitinyl-[acceptor protein]-L-lysine.</text>
        <dbReference type="EC" id="2.3.2.27"/>
    </reaction>
</comment>
<comment type="pathway">
    <text>Protein modification; protein ubiquitination.</text>
</comment>
<accession>Q4SRI6</accession>
<protein>
    <recommendedName>
        <fullName>Probable E3 ubiquitin-protein ligase makorin-1</fullName>
        <ecNumber>2.3.2.27</ecNumber>
    </recommendedName>
    <alternativeName>
        <fullName evidence="7">RING-type E3 ubiquitin transferase makorin-1</fullName>
    </alternativeName>
</protein>
<sequence>MAEAAVASTVTLPVSGGWTKHVTCRYFMHGLCKEGDNCRYSHDLTNSKPAAMICKFFQKGNCVFGERCRFDHCKPTKNEEFSSPQMLPPSSPSPSTDPESSQPAPRPKTQDWANAAEFVPGQPYCGRAESVKVEISIPLIEELDCDAAVDKEALRKQLCPYAAVGECRYGINCAYLHGDVCDMCGLQVLHPTDNSQRSQHTKACIEAHEKDMEISFAIQRSKDMMCGVCMEVVFEKANPSERRFGILSNCNHCYCLKCIRKWRSAKQFESKIIKSCPECRITSNFVIPSEYWVEDKEDKQKLIQKYKDGMGRKPCRYFDEGRGICPFGANCFYKHAFPDGRLEEAQPQRRQTGSSSRNRLSEMLLMLLAAGD</sequence>
<dbReference type="EC" id="2.3.2.27"/>
<dbReference type="EMBL" id="CAAE01014526">
    <property type="protein sequence ID" value="CAF96746.1"/>
    <property type="molecule type" value="Genomic_DNA"/>
</dbReference>
<dbReference type="FunCoup" id="Q4SRI6">
    <property type="interactions" value="284"/>
</dbReference>
<dbReference type="STRING" id="99883.ENSTNIP00000003623"/>
<dbReference type="KEGG" id="tng:GSTEN00013898G001"/>
<dbReference type="InParanoid" id="Q4SRI6"/>
<dbReference type="OrthoDB" id="411372at2759"/>
<dbReference type="UniPathway" id="UPA00143"/>
<dbReference type="Proteomes" id="UP000007303">
    <property type="component" value="Unassembled WGS sequence"/>
</dbReference>
<dbReference type="GO" id="GO:0061630">
    <property type="term" value="F:ubiquitin protein ligase activity"/>
    <property type="evidence" value="ECO:0007669"/>
    <property type="project" value="InterPro"/>
</dbReference>
<dbReference type="GO" id="GO:0008270">
    <property type="term" value="F:zinc ion binding"/>
    <property type="evidence" value="ECO:0007669"/>
    <property type="project" value="UniProtKB-KW"/>
</dbReference>
<dbReference type="GO" id="GO:0000209">
    <property type="term" value="P:protein polyubiquitination"/>
    <property type="evidence" value="ECO:0007669"/>
    <property type="project" value="InterPro"/>
</dbReference>
<dbReference type="CDD" id="cd16730">
    <property type="entry name" value="RING-HC_MKRN1_3"/>
    <property type="match status" value="1"/>
</dbReference>
<dbReference type="FunFam" id="3.30.40.10:FF:000117">
    <property type="entry name" value="Probable E3 ubiquitin-protein ligase makorin-1"/>
    <property type="match status" value="1"/>
</dbReference>
<dbReference type="Gene3D" id="4.10.1000.10">
    <property type="entry name" value="Zinc finger, CCCH-type"/>
    <property type="match status" value="1"/>
</dbReference>
<dbReference type="Gene3D" id="3.30.40.10">
    <property type="entry name" value="Zinc/RING finger domain, C3HC4 (zinc finger)"/>
    <property type="match status" value="1"/>
</dbReference>
<dbReference type="InterPro" id="IPR045072">
    <property type="entry name" value="MKRN-like"/>
</dbReference>
<dbReference type="InterPro" id="IPR041367">
    <property type="entry name" value="Znf-CCCH_4"/>
</dbReference>
<dbReference type="InterPro" id="IPR000571">
    <property type="entry name" value="Znf_CCCH"/>
</dbReference>
<dbReference type="InterPro" id="IPR036855">
    <property type="entry name" value="Znf_CCCH_sf"/>
</dbReference>
<dbReference type="InterPro" id="IPR001841">
    <property type="entry name" value="Znf_RING"/>
</dbReference>
<dbReference type="InterPro" id="IPR013083">
    <property type="entry name" value="Znf_RING/FYVE/PHD"/>
</dbReference>
<dbReference type="InterPro" id="IPR017907">
    <property type="entry name" value="Znf_RING_CS"/>
</dbReference>
<dbReference type="PANTHER" id="PTHR11224:SF37">
    <property type="entry name" value="E3 UBIQUITIN-PROTEIN LIGASE MAKORIN-1"/>
    <property type="match status" value="1"/>
</dbReference>
<dbReference type="PANTHER" id="PTHR11224">
    <property type="entry name" value="MAKORIN-RELATED"/>
    <property type="match status" value="1"/>
</dbReference>
<dbReference type="Pfam" id="PF14608">
    <property type="entry name" value="zf-CCCH_2"/>
    <property type="match status" value="1"/>
</dbReference>
<dbReference type="Pfam" id="PF18044">
    <property type="entry name" value="zf-CCCH_4"/>
    <property type="match status" value="3"/>
</dbReference>
<dbReference type="SMART" id="SM00184">
    <property type="entry name" value="RING"/>
    <property type="match status" value="1"/>
</dbReference>
<dbReference type="SMART" id="SM00356">
    <property type="entry name" value="ZnF_C3H1"/>
    <property type="match status" value="4"/>
</dbReference>
<dbReference type="SUPFAM" id="SSF90229">
    <property type="entry name" value="CCCH zinc finger"/>
    <property type="match status" value="2"/>
</dbReference>
<dbReference type="SUPFAM" id="SSF57850">
    <property type="entry name" value="RING/U-box"/>
    <property type="match status" value="1"/>
</dbReference>
<dbReference type="PROSITE" id="PS50103">
    <property type="entry name" value="ZF_C3H1"/>
    <property type="match status" value="4"/>
</dbReference>
<dbReference type="PROSITE" id="PS00518">
    <property type="entry name" value="ZF_RING_1"/>
    <property type="match status" value="1"/>
</dbReference>
<dbReference type="PROSITE" id="PS50089">
    <property type="entry name" value="ZF_RING_2"/>
    <property type="match status" value="1"/>
</dbReference>
<name>MKRN1_TETNG</name>
<keyword id="KW-0479">Metal-binding</keyword>
<keyword id="KW-1185">Reference proteome</keyword>
<keyword id="KW-0677">Repeat</keyword>
<keyword id="KW-0808">Transferase</keyword>
<keyword id="KW-0833">Ubl conjugation pathway</keyword>
<keyword id="KW-0862">Zinc</keyword>
<keyword id="KW-0863">Zinc-finger</keyword>
<evidence type="ECO:0000250" key="1"/>
<evidence type="ECO:0000250" key="2">
    <source>
        <dbReference type="UniProtKB" id="Q9UHC7"/>
    </source>
</evidence>
<evidence type="ECO:0000255" key="3"/>
<evidence type="ECO:0000255" key="4">
    <source>
        <dbReference type="PROSITE-ProRule" id="PRU00175"/>
    </source>
</evidence>
<evidence type="ECO:0000255" key="5">
    <source>
        <dbReference type="PROSITE-ProRule" id="PRU00723"/>
    </source>
</evidence>
<evidence type="ECO:0000256" key="6">
    <source>
        <dbReference type="SAM" id="MobiDB-lite"/>
    </source>
</evidence>
<evidence type="ECO:0000305" key="7"/>
<evidence type="ECO:0000312" key="8">
    <source>
        <dbReference type="EMBL" id="CAF96746.1"/>
    </source>
</evidence>
<proteinExistence type="inferred from homology"/>
<reference evidence="8" key="1">
    <citation type="journal article" date="2004" name="Nature">
        <title>Genome duplication in the teleost fish Tetraodon nigroviridis reveals the early vertebrate proto-karyotype.</title>
        <authorList>
            <person name="Jaillon O."/>
            <person name="Aury J.-M."/>
            <person name="Brunet F."/>
            <person name="Petit J.-L."/>
            <person name="Stange-Thomann N."/>
            <person name="Mauceli E."/>
            <person name="Bouneau L."/>
            <person name="Fischer C."/>
            <person name="Ozouf-Costaz C."/>
            <person name="Bernot A."/>
            <person name="Nicaud S."/>
            <person name="Jaffe D."/>
            <person name="Fisher S."/>
            <person name="Lutfalla G."/>
            <person name="Dossat C."/>
            <person name="Segurens B."/>
            <person name="Dasilva C."/>
            <person name="Salanoubat M."/>
            <person name="Levy M."/>
            <person name="Boudet N."/>
            <person name="Castellano S."/>
            <person name="Anthouard V."/>
            <person name="Jubin C."/>
            <person name="Castelli V."/>
            <person name="Katinka M."/>
            <person name="Vacherie B."/>
            <person name="Biemont C."/>
            <person name="Skalli Z."/>
            <person name="Cattolico L."/>
            <person name="Poulain J."/>
            <person name="De Berardinis V."/>
            <person name="Cruaud C."/>
            <person name="Duprat S."/>
            <person name="Brottier P."/>
            <person name="Coutanceau J.-P."/>
            <person name="Gouzy J."/>
            <person name="Parra G."/>
            <person name="Lardier G."/>
            <person name="Chapple C."/>
            <person name="McKernan K.J."/>
            <person name="McEwan P."/>
            <person name="Bosak S."/>
            <person name="Kellis M."/>
            <person name="Volff J.-N."/>
            <person name="Guigo R."/>
            <person name="Zody M.C."/>
            <person name="Mesirov J."/>
            <person name="Lindblad-Toh K."/>
            <person name="Birren B."/>
            <person name="Nusbaum C."/>
            <person name="Kahn D."/>
            <person name="Robinson-Rechavi M."/>
            <person name="Laudet V."/>
            <person name="Schachter V."/>
            <person name="Quetier F."/>
            <person name="Saurin W."/>
            <person name="Scarpelli C."/>
            <person name="Wincker P."/>
            <person name="Lander E.S."/>
            <person name="Weissenbach J."/>
            <person name="Roest Crollius H."/>
        </authorList>
    </citation>
    <scope>NUCLEOTIDE SEQUENCE [LARGE SCALE GENOMIC DNA]</scope>
</reference>